<evidence type="ECO:0000255" key="1">
    <source>
        <dbReference type="HAMAP-Rule" id="MF_00294"/>
    </source>
</evidence>
<evidence type="ECO:0000305" key="2"/>
<gene>
    <name evidence="1" type="primary">rpmG</name>
    <name type="ordered locus">BP2050</name>
</gene>
<name>RL33_BORPE</name>
<comment type="similarity">
    <text evidence="1">Belongs to the bacterial ribosomal protein bL33 family.</text>
</comment>
<accession>Q7VWY2</accession>
<organism>
    <name type="scientific">Bordetella pertussis (strain Tohama I / ATCC BAA-589 / NCTC 13251)</name>
    <dbReference type="NCBI Taxonomy" id="257313"/>
    <lineage>
        <taxon>Bacteria</taxon>
        <taxon>Pseudomonadati</taxon>
        <taxon>Pseudomonadota</taxon>
        <taxon>Betaproteobacteria</taxon>
        <taxon>Burkholderiales</taxon>
        <taxon>Alcaligenaceae</taxon>
        <taxon>Bordetella</taxon>
    </lineage>
</organism>
<sequence length="55" mass="6496">MAKDIREKIKLESTAGTGHFYTTTKNKRNMPEKMLIKKFDPVARKHVDYKETKLK</sequence>
<feature type="chain" id="PRO_1000115100" description="Large ribosomal subunit protein bL33">
    <location>
        <begin position="1"/>
        <end position="55"/>
    </location>
</feature>
<dbReference type="EMBL" id="BX640417">
    <property type="protein sequence ID" value="CAE42329.1"/>
    <property type="molecule type" value="Genomic_DNA"/>
</dbReference>
<dbReference type="RefSeq" id="NP_880717.1">
    <property type="nucleotide sequence ID" value="NC_002929.2"/>
</dbReference>
<dbReference type="RefSeq" id="WP_010930711.1">
    <property type="nucleotide sequence ID" value="NZ_CP039022.1"/>
</dbReference>
<dbReference type="SMR" id="Q7VWY2"/>
<dbReference type="STRING" id="257313.BP2050"/>
<dbReference type="PaxDb" id="257313-BP2050"/>
<dbReference type="GeneID" id="69601820"/>
<dbReference type="KEGG" id="bpe:BP2050"/>
<dbReference type="PATRIC" id="fig|257313.5.peg.2203"/>
<dbReference type="eggNOG" id="COG0267">
    <property type="taxonomic scope" value="Bacteria"/>
</dbReference>
<dbReference type="HOGENOM" id="CLU_190949_1_1_4"/>
<dbReference type="Proteomes" id="UP000002676">
    <property type="component" value="Chromosome"/>
</dbReference>
<dbReference type="GO" id="GO:0022625">
    <property type="term" value="C:cytosolic large ribosomal subunit"/>
    <property type="evidence" value="ECO:0007669"/>
    <property type="project" value="TreeGrafter"/>
</dbReference>
<dbReference type="GO" id="GO:0003735">
    <property type="term" value="F:structural constituent of ribosome"/>
    <property type="evidence" value="ECO:0007669"/>
    <property type="project" value="InterPro"/>
</dbReference>
<dbReference type="GO" id="GO:0006412">
    <property type="term" value="P:translation"/>
    <property type="evidence" value="ECO:0007669"/>
    <property type="project" value="UniProtKB-UniRule"/>
</dbReference>
<dbReference type="FunFam" id="2.20.28.120:FF:000001">
    <property type="entry name" value="50S ribosomal protein L33"/>
    <property type="match status" value="1"/>
</dbReference>
<dbReference type="Gene3D" id="2.20.28.120">
    <property type="entry name" value="Ribosomal protein L33"/>
    <property type="match status" value="1"/>
</dbReference>
<dbReference type="HAMAP" id="MF_00294">
    <property type="entry name" value="Ribosomal_bL33"/>
    <property type="match status" value="1"/>
</dbReference>
<dbReference type="InterPro" id="IPR001705">
    <property type="entry name" value="Ribosomal_bL33"/>
</dbReference>
<dbReference type="InterPro" id="IPR038584">
    <property type="entry name" value="Ribosomal_bL33_sf"/>
</dbReference>
<dbReference type="InterPro" id="IPR011332">
    <property type="entry name" value="Ribosomal_zn-bd"/>
</dbReference>
<dbReference type="NCBIfam" id="NF001860">
    <property type="entry name" value="PRK00595.1"/>
    <property type="match status" value="1"/>
</dbReference>
<dbReference type="NCBIfam" id="TIGR01023">
    <property type="entry name" value="rpmG_bact"/>
    <property type="match status" value="1"/>
</dbReference>
<dbReference type="PANTHER" id="PTHR15238">
    <property type="entry name" value="54S RIBOSOMAL PROTEIN L39, MITOCHONDRIAL"/>
    <property type="match status" value="1"/>
</dbReference>
<dbReference type="PANTHER" id="PTHR15238:SF1">
    <property type="entry name" value="LARGE RIBOSOMAL SUBUNIT PROTEIN BL33M"/>
    <property type="match status" value="1"/>
</dbReference>
<dbReference type="Pfam" id="PF00471">
    <property type="entry name" value="Ribosomal_L33"/>
    <property type="match status" value="1"/>
</dbReference>
<dbReference type="SUPFAM" id="SSF57829">
    <property type="entry name" value="Zn-binding ribosomal proteins"/>
    <property type="match status" value="1"/>
</dbReference>
<proteinExistence type="inferred from homology"/>
<keyword id="KW-1185">Reference proteome</keyword>
<keyword id="KW-0687">Ribonucleoprotein</keyword>
<keyword id="KW-0689">Ribosomal protein</keyword>
<protein>
    <recommendedName>
        <fullName evidence="1">Large ribosomal subunit protein bL33</fullName>
    </recommendedName>
    <alternativeName>
        <fullName evidence="2">50S ribosomal protein L33</fullName>
    </alternativeName>
</protein>
<reference key="1">
    <citation type="journal article" date="2003" name="Nat. Genet.">
        <title>Comparative analysis of the genome sequences of Bordetella pertussis, Bordetella parapertussis and Bordetella bronchiseptica.</title>
        <authorList>
            <person name="Parkhill J."/>
            <person name="Sebaihia M."/>
            <person name="Preston A."/>
            <person name="Murphy L.D."/>
            <person name="Thomson N.R."/>
            <person name="Harris D.E."/>
            <person name="Holden M.T.G."/>
            <person name="Churcher C.M."/>
            <person name="Bentley S.D."/>
            <person name="Mungall K.L."/>
            <person name="Cerdeno-Tarraga A.-M."/>
            <person name="Temple L."/>
            <person name="James K.D."/>
            <person name="Harris B."/>
            <person name="Quail M.A."/>
            <person name="Achtman M."/>
            <person name="Atkin R."/>
            <person name="Baker S."/>
            <person name="Basham D."/>
            <person name="Bason N."/>
            <person name="Cherevach I."/>
            <person name="Chillingworth T."/>
            <person name="Collins M."/>
            <person name="Cronin A."/>
            <person name="Davis P."/>
            <person name="Doggett J."/>
            <person name="Feltwell T."/>
            <person name="Goble A."/>
            <person name="Hamlin N."/>
            <person name="Hauser H."/>
            <person name="Holroyd S."/>
            <person name="Jagels K."/>
            <person name="Leather S."/>
            <person name="Moule S."/>
            <person name="Norberczak H."/>
            <person name="O'Neil S."/>
            <person name="Ormond D."/>
            <person name="Price C."/>
            <person name="Rabbinowitsch E."/>
            <person name="Rutter S."/>
            <person name="Sanders M."/>
            <person name="Saunders D."/>
            <person name="Seeger K."/>
            <person name="Sharp S."/>
            <person name="Simmonds M."/>
            <person name="Skelton J."/>
            <person name="Squares R."/>
            <person name="Squares S."/>
            <person name="Stevens K."/>
            <person name="Unwin L."/>
            <person name="Whitehead S."/>
            <person name="Barrell B.G."/>
            <person name="Maskell D.J."/>
        </authorList>
    </citation>
    <scope>NUCLEOTIDE SEQUENCE [LARGE SCALE GENOMIC DNA]</scope>
    <source>
        <strain>Tohama I / ATCC BAA-589 / NCTC 13251</strain>
    </source>
</reference>